<reference key="1">
    <citation type="journal article" date="2005" name="Nature">
        <title>Genomic sequence of the pathogenic and allergenic filamentous fungus Aspergillus fumigatus.</title>
        <authorList>
            <person name="Nierman W.C."/>
            <person name="Pain A."/>
            <person name="Anderson M.J."/>
            <person name="Wortman J.R."/>
            <person name="Kim H.S."/>
            <person name="Arroyo J."/>
            <person name="Berriman M."/>
            <person name="Abe K."/>
            <person name="Archer D.B."/>
            <person name="Bermejo C."/>
            <person name="Bennett J.W."/>
            <person name="Bowyer P."/>
            <person name="Chen D."/>
            <person name="Collins M."/>
            <person name="Coulsen R."/>
            <person name="Davies R."/>
            <person name="Dyer P.S."/>
            <person name="Farman M.L."/>
            <person name="Fedorova N."/>
            <person name="Fedorova N.D."/>
            <person name="Feldblyum T.V."/>
            <person name="Fischer R."/>
            <person name="Fosker N."/>
            <person name="Fraser A."/>
            <person name="Garcia J.L."/>
            <person name="Garcia M.J."/>
            <person name="Goble A."/>
            <person name="Goldman G.H."/>
            <person name="Gomi K."/>
            <person name="Griffith-Jones S."/>
            <person name="Gwilliam R."/>
            <person name="Haas B.J."/>
            <person name="Haas H."/>
            <person name="Harris D.E."/>
            <person name="Horiuchi H."/>
            <person name="Huang J."/>
            <person name="Humphray S."/>
            <person name="Jimenez J."/>
            <person name="Keller N."/>
            <person name="Khouri H."/>
            <person name="Kitamoto K."/>
            <person name="Kobayashi T."/>
            <person name="Konzack S."/>
            <person name="Kulkarni R."/>
            <person name="Kumagai T."/>
            <person name="Lafton A."/>
            <person name="Latge J.-P."/>
            <person name="Li W."/>
            <person name="Lord A."/>
            <person name="Lu C."/>
            <person name="Majoros W.H."/>
            <person name="May G.S."/>
            <person name="Miller B.L."/>
            <person name="Mohamoud Y."/>
            <person name="Molina M."/>
            <person name="Monod M."/>
            <person name="Mouyna I."/>
            <person name="Mulligan S."/>
            <person name="Murphy L.D."/>
            <person name="O'Neil S."/>
            <person name="Paulsen I."/>
            <person name="Penalva M.A."/>
            <person name="Pertea M."/>
            <person name="Price C."/>
            <person name="Pritchard B.L."/>
            <person name="Quail M.A."/>
            <person name="Rabbinowitsch E."/>
            <person name="Rawlins N."/>
            <person name="Rajandream M.A."/>
            <person name="Reichard U."/>
            <person name="Renauld H."/>
            <person name="Robson G.D."/>
            <person name="Rodriguez de Cordoba S."/>
            <person name="Rodriguez-Pena J.M."/>
            <person name="Ronning C.M."/>
            <person name="Rutter S."/>
            <person name="Salzberg S.L."/>
            <person name="Sanchez M."/>
            <person name="Sanchez-Ferrero J.C."/>
            <person name="Saunders D."/>
            <person name="Seeger K."/>
            <person name="Squares R."/>
            <person name="Squares S."/>
            <person name="Takeuchi M."/>
            <person name="Tekaia F."/>
            <person name="Turner G."/>
            <person name="Vazquez de Aldana C.R."/>
            <person name="Weidman J."/>
            <person name="White O."/>
            <person name="Woodward J.R."/>
            <person name="Yu J.-H."/>
            <person name="Fraser C.M."/>
            <person name="Galagan J.E."/>
            <person name="Asai K."/>
            <person name="Machida M."/>
            <person name="Hall N."/>
            <person name="Barrell B.G."/>
            <person name="Denning D.W."/>
        </authorList>
    </citation>
    <scope>NUCLEOTIDE SEQUENCE [LARGE SCALE GENOMIC DNA]</scope>
    <source>
        <strain>ATCC MYA-4609 / CBS 101355 / FGSC A1100 / Af293</strain>
    </source>
</reference>
<reference key="2">
    <citation type="journal article" date="2012" name="Mol. Microbiol.">
        <title>The fungal alpha-aminoadipate pathway for lysine biosynthesis requires two enzymes of the aconitase family for the isomerization of homocitrate to homoisocitrate.</title>
        <authorList>
            <person name="Fazius F."/>
            <person name="Shelest E."/>
            <person name="Gebhardt P."/>
            <person name="Brock M."/>
        </authorList>
    </citation>
    <scope>FUNCTION</scope>
    <scope>INDUCTION</scope>
</reference>
<protein>
    <recommendedName>
        <fullName>Putative aconitate hydratase, mitochondrial</fullName>
    </recommendedName>
    <alternativeName>
        <fullName>Aconitase 2</fullName>
        <ecNumber>4.2.1.-</ecNumber>
    </alternativeName>
</protein>
<proteinExistence type="evidence at transcript level"/>
<accession>Q4WJ90</accession>
<name>ACON2_ASPFU</name>
<sequence>MVRQLVWQRATASRRLAPKCLSPQQLFARRGLATEASAARMPPYPKIVRNLEQVRKVLGSSRALTLAEKILYAHLDNAEESLLTGTNNGKDIRGKANLKLKPDRVAMQDASAQMALLQFMSCGLPSTAVPASIHCDHMIVGERGADTDLPASIEGNREVFDFLESAAKRYGIEFWPPGAGIIHQSVLENYAAPGLMMLGTDSHTPNAGGLGAIAIGVGGADAVDALVDAPWELKAPRILGVRLEGRLSGWASPKDIILHLAGKLTVRGGTGYVIEYHGPGVETLSCTGMATCCNMGAEVGATTSVFPFSPSMVPYLQATHRGHVAQAAAEIAASGPKNLLRADDGAEYDQLITIDLSTLEPHVNGPFTPDLSVRLSDFANTVRENKWPETLGAGLIGSCTNSSYEDMTRAEDLVKQASAAGLKPKADFFITPGSEQIRATLDRDQTLASFSEAGGTVLANACGPCIGQWKRTDGVAKGEDNAIFTSYNRNFPGRNDGNRRTMNFLASPEIVTALAYSGSTTFNPMTDTLKTPSGEEFKFRPPQGSDLPSAGFADGNPALQPSAGVPDASVEVIVSPTSERLALLEPFAPFPEGELSGLKVLYKVKGQCTTDTISAAGPWLKYKGHLPNISANTLIGAVNAATGETNVAYDDAGNKHSIPDLAARWKADGIEWLVVAEDNYGEGSAREHAALQPRYLGGRIIVAKSFARIHETNLKKQGVVPLTFADKADYDRIDACDQVDTVGLYETLQSGGQGSIQLQVTKKSGEKLTIPVNHTLSKDQCGFILAGSALNLLAKRAHQ</sequence>
<organism>
    <name type="scientific">Aspergillus fumigatus (strain ATCC MYA-4609 / CBS 101355 / FGSC A1100 / Af293)</name>
    <name type="common">Neosartorya fumigata</name>
    <dbReference type="NCBI Taxonomy" id="330879"/>
    <lineage>
        <taxon>Eukaryota</taxon>
        <taxon>Fungi</taxon>
        <taxon>Dikarya</taxon>
        <taxon>Ascomycota</taxon>
        <taxon>Pezizomycotina</taxon>
        <taxon>Eurotiomycetes</taxon>
        <taxon>Eurotiomycetidae</taxon>
        <taxon>Eurotiales</taxon>
        <taxon>Aspergillaceae</taxon>
        <taxon>Aspergillus</taxon>
        <taxon>Aspergillus subgen. Fumigati</taxon>
    </lineage>
</organism>
<comment type="function">
    <text evidence="4">Has no detectable activity towards cis-acontiate or cis-homoaconitate.</text>
</comment>
<comment type="subcellular location">
    <subcellularLocation>
        <location evidence="5">Mitochondrion</location>
    </subcellularLocation>
</comment>
<comment type="induction">
    <text evidence="4">Constitutively expressed on glucose medium and on ethanol.</text>
</comment>
<comment type="miscellaneous">
    <text>The fermenting yeast S.cerevisiae has 2 aconitases, ACO1 essential for the citric acid cycle, and ACO2 specifically and exclusively contributing to lysine biosynthesis. In contrast, in respiring filamentous fungi the ACO2 homologs (acoB) seem enzymatically inactive and the ACO1 homolog (acoA) is solely responsible for these functions.</text>
</comment>
<comment type="similarity">
    <text evidence="5">Belongs to the aconitase/IPM isomerase family.</text>
</comment>
<feature type="transit peptide" description="Mitochondrion" evidence="2">
    <location>
        <begin position="1"/>
        <end position="32"/>
    </location>
</feature>
<feature type="chain" id="PRO_0000425363" description="Putative aconitate hydratase, mitochondrial">
    <location>
        <begin position="33"/>
        <end position="799"/>
    </location>
</feature>
<feature type="region of interest" description="Disordered" evidence="3">
    <location>
        <begin position="538"/>
        <end position="564"/>
    </location>
</feature>
<feature type="binding site" evidence="1">
    <location>
        <position position="108"/>
    </location>
    <ligand>
        <name>substrate</name>
    </ligand>
</feature>
<feature type="binding site" evidence="1">
    <location>
        <begin position="201"/>
        <end position="203"/>
    </location>
    <ligand>
        <name>substrate</name>
    </ligand>
</feature>
<feature type="binding site" evidence="1">
    <location>
        <position position="399"/>
    </location>
    <ligand>
        <name>[4Fe-4S] cluster</name>
        <dbReference type="ChEBI" id="CHEBI:49883"/>
    </ligand>
</feature>
<feature type="binding site" evidence="1">
    <location>
        <position position="462"/>
    </location>
    <ligand>
        <name>[4Fe-4S] cluster</name>
        <dbReference type="ChEBI" id="CHEBI:49883"/>
    </ligand>
</feature>
<feature type="binding site" evidence="1">
    <location>
        <position position="465"/>
    </location>
    <ligand>
        <name>[4Fe-4S] cluster</name>
        <dbReference type="ChEBI" id="CHEBI:49883"/>
    </ligand>
</feature>
<feature type="binding site" evidence="1">
    <location>
        <position position="489"/>
    </location>
    <ligand>
        <name>substrate</name>
    </ligand>
</feature>
<feature type="binding site" evidence="1">
    <location>
        <position position="494"/>
    </location>
    <ligand>
        <name>substrate</name>
    </ligand>
</feature>
<feature type="binding site" evidence="1">
    <location>
        <begin position="685"/>
        <end position="686"/>
    </location>
    <ligand>
        <name>substrate</name>
    </ligand>
</feature>
<dbReference type="EC" id="4.2.1.-"/>
<dbReference type="EMBL" id="AAHF01000007">
    <property type="protein sequence ID" value="EAL88392.1"/>
    <property type="molecule type" value="Genomic_DNA"/>
</dbReference>
<dbReference type="RefSeq" id="XP_750430.1">
    <property type="nucleotide sequence ID" value="XM_745337.1"/>
</dbReference>
<dbReference type="SMR" id="Q4WJ90"/>
<dbReference type="FunCoup" id="Q4WJ90">
    <property type="interactions" value="256"/>
</dbReference>
<dbReference type="STRING" id="330879.Q4WJ90"/>
<dbReference type="EnsemblFungi" id="EAL88392">
    <property type="protein sequence ID" value="EAL88392"/>
    <property type="gene ID" value="AFUA_1G06810"/>
</dbReference>
<dbReference type="GeneID" id="3507689"/>
<dbReference type="KEGG" id="afm:AFUA_1G06810"/>
<dbReference type="eggNOG" id="KOG0453">
    <property type="taxonomic scope" value="Eukaryota"/>
</dbReference>
<dbReference type="HOGENOM" id="CLU_006714_2_2_1"/>
<dbReference type="InParanoid" id="Q4WJ90"/>
<dbReference type="OMA" id="KWPETFG"/>
<dbReference type="OrthoDB" id="2224430at2759"/>
<dbReference type="Proteomes" id="UP000002530">
    <property type="component" value="Chromosome 1"/>
</dbReference>
<dbReference type="GO" id="GO:0005829">
    <property type="term" value="C:cytosol"/>
    <property type="evidence" value="ECO:0000318"/>
    <property type="project" value="GO_Central"/>
</dbReference>
<dbReference type="GO" id="GO:0005739">
    <property type="term" value="C:mitochondrion"/>
    <property type="evidence" value="ECO:0000318"/>
    <property type="project" value="GO_Central"/>
</dbReference>
<dbReference type="GO" id="GO:0051539">
    <property type="term" value="F:4 iron, 4 sulfur cluster binding"/>
    <property type="evidence" value="ECO:0000318"/>
    <property type="project" value="GO_Central"/>
</dbReference>
<dbReference type="GO" id="GO:0003994">
    <property type="term" value="F:aconitate hydratase activity"/>
    <property type="evidence" value="ECO:0000318"/>
    <property type="project" value="GO_Central"/>
</dbReference>
<dbReference type="GO" id="GO:0046872">
    <property type="term" value="F:metal ion binding"/>
    <property type="evidence" value="ECO:0007669"/>
    <property type="project" value="UniProtKB-KW"/>
</dbReference>
<dbReference type="GO" id="GO:0006099">
    <property type="term" value="P:tricarboxylic acid cycle"/>
    <property type="evidence" value="ECO:0007669"/>
    <property type="project" value="InterPro"/>
</dbReference>
<dbReference type="FunFam" id="3.20.19.10:FF:000002">
    <property type="entry name" value="Aconitate hydratase, mitochondrial"/>
    <property type="match status" value="1"/>
</dbReference>
<dbReference type="FunFam" id="3.30.499.10:FF:000003">
    <property type="entry name" value="Aconitate hydratase, mitochondrial"/>
    <property type="match status" value="1"/>
</dbReference>
<dbReference type="FunFam" id="3.30.499.10:FF:000004">
    <property type="entry name" value="Aconitate hydratase, mitochondrial"/>
    <property type="match status" value="1"/>
</dbReference>
<dbReference type="FunFam" id="3.40.1060.10:FF:000001">
    <property type="entry name" value="Aconitate hydratase, mitochondrial"/>
    <property type="match status" value="1"/>
</dbReference>
<dbReference type="Gene3D" id="3.40.1060.10">
    <property type="entry name" value="Aconitase, Domain 2"/>
    <property type="match status" value="1"/>
</dbReference>
<dbReference type="Gene3D" id="3.30.499.10">
    <property type="entry name" value="Aconitase, domain 3"/>
    <property type="match status" value="2"/>
</dbReference>
<dbReference type="Gene3D" id="3.20.19.10">
    <property type="entry name" value="Aconitase, domain 4"/>
    <property type="match status" value="1"/>
</dbReference>
<dbReference type="InterPro" id="IPR015931">
    <property type="entry name" value="Acnase/IPM_dHydase_lsu_aba_1/3"/>
</dbReference>
<dbReference type="InterPro" id="IPR001030">
    <property type="entry name" value="Acoase/IPM_deHydtase_lsu_aba"/>
</dbReference>
<dbReference type="InterPro" id="IPR015928">
    <property type="entry name" value="Aconitase/3IPM_dehydase_swvl"/>
</dbReference>
<dbReference type="InterPro" id="IPR050926">
    <property type="entry name" value="Aconitase/IPM_isomerase"/>
</dbReference>
<dbReference type="InterPro" id="IPR018136">
    <property type="entry name" value="Aconitase_4Fe-4S_BS"/>
</dbReference>
<dbReference type="InterPro" id="IPR036008">
    <property type="entry name" value="Aconitase_4Fe-4S_dom"/>
</dbReference>
<dbReference type="InterPro" id="IPR015932">
    <property type="entry name" value="Aconitase_dom2"/>
</dbReference>
<dbReference type="InterPro" id="IPR006248">
    <property type="entry name" value="Aconitase_mito-like"/>
</dbReference>
<dbReference type="InterPro" id="IPR000573">
    <property type="entry name" value="AconitaseA/IPMdHydase_ssu_swvl"/>
</dbReference>
<dbReference type="NCBIfam" id="TIGR01340">
    <property type="entry name" value="aconitase_mito"/>
    <property type="match status" value="1"/>
</dbReference>
<dbReference type="NCBIfam" id="NF005558">
    <property type="entry name" value="PRK07229.1"/>
    <property type="match status" value="1"/>
</dbReference>
<dbReference type="PANTHER" id="PTHR43160">
    <property type="entry name" value="ACONITATE HYDRATASE B"/>
    <property type="match status" value="1"/>
</dbReference>
<dbReference type="PANTHER" id="PTHR43160:SF2">
    <property type="entry name" value="HOMOCITRATE DEHYDRATASE, MITOCHONDRIAL"/>
    <property type="match status" value="1"/>
</dbReference>
<dbReference type="Pfam" id="PF00330">
    <property type="entry name" value="Aconitase"/>
    <property type="match status" value="1"/>
</dbReference>
<dbReference type="Pfam" id="PF00694">
    <property type="entry name" value="Aconitase_C"/>
    <property type="match status" value="1"/>
</dbReference>
<dbReference type="PRINTS" id="PR00415">
    <property type="entry name" value="ACONITASE"/>
</dbReference>
<dbReference type="SUPFAM" id="SSF53732">
    <property type="entry name" value="Aconitase iron-sulfur domain"/>
    <property type="match status" value="1"/>
</dbReference>
<dbReference type="SUPFAM" id="SSF52016">
    <property type="entry name" value="LeuD/IlvD-like"/>
    <property type="match status" value="1"/>
</dbReference>
<dbReference type="PROSITE" id="PS00450">
    <property type="entry name" value="ACONITASE_1"/>
    <property type="match status" value="1"/>
</dbReference>
<dbReference type="PROSITE" id="PS01244">
    <property type="entry name" value="ACONITASE_2"/>
    <property type="match status" value="1"/>
</dbReference>
<gene>
    <name type="primary">acoB</name>
    <name type="ORF">Afu1g06810</name>
</gene>
<keyword id="KW-0004">4Fe-4S</keyword>
<keyword id="KW-0408">Iron</keyword>
<keyword id="KW-0411">Iron-sulfur</keyword>
<keyword id="KW-0456">Lyase</keyword>
<keyword id="KW-0479">Metal-binding</keyword>
<keyword id="KW-0496">Mitochondrion</keyword>
<keyword id="KW-1185">Reference proteome</keyword>
<keyword id="KW-0809">Transit peptide</keyword>
<evidence type="ECO:0000250" key="1"/>
<evidence type="ECO:0000255" key="2"/>
<evidence type="ECO:0000256" key="3">
    <source>
        <dbReference type="SAM" id="MobiDB-lite"/>
    </source>
</evidence>
<evidence type="ECO:0000269" key="4">
    <source>
    </source>
</evidence>
<evidence type="ECO:0000305" key="5"/>